<protein>
    <recommendedName>
        <fullName>Acyl carrier protein MbtL</fullName>
        <shortName>ACP</shortName>
    </recommendedName>
    <alternativeName>
        <fullName>Mycobactin synthase protein L</fullName>
    </alternativeName>
</protein>
<feature type="chain" id="PRO_0000426787" description="Acyl carrier protein MbtL">
    <location>
        <begin position="1"/>
        <end position="84"/>
    </location>
</feature>
<feature type="domain" description="Carrier" evidence="2">
    <location>
        <begin position="6"/>
        <end position="81"/>
    </location>
</feature>
<feature type="modified residue" description="O-(pantetheine 4'-phosphoryl)serine" evidence="2">
    <location>
        <position position="41"/>
    </location>
</feature>
<name>MBTL_MYCTO</name>
<reference key="1">
    <citation type="journal article" date="2002" name="J. Bacteriol.">
        <title>Whole-genome comparison of Mycobacterium tuberculosis clinical and laboratory strains.</title>
        <authorList>
            <person name="Fleischmann R.D."/>
            <person name="Alland D."/>
            <person name="Eisen J.A."/>
            <person name="Carpenter L."/>
            <person name="White O."/>
            <person name="Peterson J.D."/>
            <person name="DeBoy R.T."/>
            <person name="Dodson R.J."/>
            <person name="Gwinn M.L."/>
            <person name="Haft D.H."/>
            <person name="Hickey E.K."/>
            <person name="Kolonay J.F."/>
            <person name="Nelson W.C."/>
            <person name="Umayam L.A."/>
            <person name="Ermolaeva M.D."/>
            <person name="Salzberg S.L."/>
            <person name="Delcher A."/>
            <person name="Utterback T.R."/>
            <person name="Weidman J.F."/>
            <person name="Khouri H.M."/>
            <person name="Gill J."/>
            <person name="Mikula A."/>
            <person name="Bishai W."/>
            <person name="Jacobs W.R. Jr."/>
            <person name="Venter J.C."/>
            <person name="Fraser C.M."/>
        </authorList>
    </citation>
    <scope>NUCLEOTIDE SEQUENCE [LARGE SCALE GENOMIC DNA]</scope>
    <source>
        <strain>CDC 1551 / Oshkosh</strain>
    </source>
</reference>
<organism>
    <name type="scientific">Mycobacterium tuberculosis (strain CDC 1551 / Oshkosh)</name>
    <dbReference type="NCBI Taxonomy" id="83331"/>
    <lineage>
        <taxon>Bacteria</taxon>
        <taxon>Bacillati</taxon>
        <taxon>Actinomycetota</taxon>
        <taxon>Actinomycetes</taxon>
        <taxon>Mycobacteriales</taxon>
        <taxon>Mycobacteriaceae</taxon>
        <taxon>Mycobacterium</taxon>
        <taxon>Mycobacterium tuberculosis complex</taxon>
    </lineage>
</organism>
<comment type="function">
    <text evidence="1">Acyl carrier protein involved in the formation of acyl-S-ACP intermediates within the mycobactin biosynthesis process. The aliphatic chains carried by ACP are subsequently transferred on to the mycobactin core by MbtK (By similarity).</text>
</comment>
<comment type="pathway">
    <text>Siderophore biosynthesis; mycobactin biosynthesis.</text>
</comment>
<comment type="subcellular location">
    <subcellularLocation>
        <location evidence="1">Cytoplasm</location>
    </subcellularLocation>
</comment>
<comment type="PTM">
    <text evidence="1">4'-phosphopantetheine is transferred from CoA to a specific serine of apo-ACP, leading to the activated holo-ACP form.</text>
</comment>
<comment type="sequence caution" evidence="3">
    <conflict type="erroneous initiation">
        <sequence resource="EMBL-CDS" id="AAK45650"/>
    </conflict>
</comment>
<accession>P9WQF0</accession>
<accession>L0T6K8</accession>
<accession>P63452</accession>
<accession>Q11014</accession>
<gene>
    <name type="primary">mbtL</name>
    <name type="ordered locus">MT1385</name>
</gene>
<proteinExistence type="inferred from homology"/>
<keyword id="KW-0963">Cytoplasm</keyword>
<keyword id="KW-0596">Phosphopantetheine</keyword>
<keyword id="KW-0597">Phosphoprotein</keyword>
<keyword id="KW-1185">Reference proteome</keyword>
<evidence type="ECO:0000250" key="1"/>
<evidence type="ECO:0000255" key="2">
    <source>
        <dbReference type="PROSITE-ProRule" id="PRU00258"/>
    </source>
</evidence>
<evidence type="ECO:0000305" key="3"/>
<dbReference type="EMBL" id="AE000516">
    <property type="protein sequence ID" value="AAK45650.1"/>
    <property type="status" value="ALT_INIT"/>
    <property type="molecule type" value="Genomic_DNA"/>
</dbReference>
<dbReference type="PIR" id="G70739">
    <property type="entry name" value="G70739"/>
</dbReference>
<dbReference type="RefSeq" id="WP_003911484.1">
    <property type="nucleotide sequence ID" value="NZ_KK341227.1"/>
</dbReference>
<dbReference type="SMR" id="P9WQF0"/>
<dbReference type="KEGG" id="mtc:MT1385"/>
<dbReference type="HOGENOM" id="CLU_108696_3_1_11"/>
<dbReference type="UniPathway" id="UPA00011"/>
<dbReference type="Proteomes" id="UP000001020">
    <property type="component" value="Chromosome"/>
</dbReference>
<dbReference type="GO" id="GO:0005737">
    <property type="term" value="C:cytoplasm"/>
    <property type="evidence" value="ECO:0007669"/>
    <property type="project" value="UniProtKB-SubCell"/>
</dbReference>
<dbReference type="Gene3D" id="1.10.1200.10">
    <property type="entry name" value="ACP-like"/>
    <property type="match status" value="1"/>
</dbReference>
<dbReference type="InterPro" id="IPR036736">
    <property type="entry name" value="ACP-like_sf"/>
</dbReference>
<dbReference type="InterPro" id="IPR009081">
    <property type="entry name" value="PP-bd_ACP"/>
</dbReference>
<dbReference type="NCBIfam" id="NF004533">
    <property type="entry name" value="PRK05883.1"/>
    <property type="match status" value="1"/>
</dbReference>
<dbReference type="Pfam" id="PF00550">
    <property type="entry name" value="PP-binding"/>
    <property type="match status" value="1"/>
</dbReference>
<dbReference type="SUPFAM" id="SSF47336">
    <property type="entry name" value="ACP-like"/>
    <property type="match status" value="1"/>
</dbReference>
<dbReference type="PROSITE" id="PS50075">
    <property type="entry name" value="CARRIER"/>
    <property type="match status" value="1"/>
</dbReference>
<sequence length="84" mass="8969">MTSSPSTVSTTLLSILRDDLNIDLTRVTPDARLVDDVGLDSVAFAVGMVAIEERLGVALSEEELLTCDTVGELEAAIAAKYRDE</sequence>